<name>E1B55_ADEM1</name>
<evidence type="ECO:0000250" key="1">
    <source>
        <dbReference type="UniProtKB" id="P03243"/>
    </source>
</evidence>
<evidence type="ECO:0000250" key="2">
    <source>
        <dbReference type="UniProtKB" id="P03244"/>
    </source>
</evidence>
<evidence type="ECO:0000305" key="3"/>
<organism>
    <name type="scientific">Murine adenovirus A serotype 1</name>
    <name type="common">MAdV-1</name>
    <name type="synonym">Murine adenovirus 1</name>
    <dbReference type="NCBI Taxonomy" id="10530"/>
    <lineage>
        <taxon>Viruses</taxon>
        <taxon>Varidnaviria</taxon>
        <taxon>Bamfordvirae</taxon>
        <taxon>Preplasmiviricota</taxon>
        <taxon>Tectiliviricetes</taxon>
        <taxon>Rowavirales</taxon>
        <taxon>Adenoviridae</taxon>
        <taxon>Mastadenovirus</taxon>
        <taxon>Murine mastadenovirus A</taxon>
    </lineage>
</organism>
<keyword id="KW-0244">Early protein</keyword>
<keyword id="KW-1035">Host cytoplasm</keyword>
<keyword id="KW-1048">Host nucleus</keyword>
<keyword id="KW-0945">Host-virus interaction</keyword>
<keyword id="KW-1119">Modulation of host cell apoptosis by virus</keyword>
<reference key="1">
    <citation type="journal article" date="1988" name="J. Virol.">
        <title>Identification of mouse adenovirus type 1 early region 1: DNA sequence and a conserved transactivating function.</title>
        <authorList>
            <person name="Ball A.O."/>
            <person name="Williams M.E."/>
            <person name="Spindler K.R."/>
        </authorList>
    </citation>
    <scope>NUCLEOTIDE SEQUENCE [GENOMIC DNA]</scope>
</reference>
<feature type="chain" id="PRO_0000221733" description="E1B 55 kDa protein">
    <location>
        <begin position="1"/>
        <end position="433"/>
    </location>
</feature>
<comment type="function">
    <text evidence="1">Plays a major role to prevent cellular inhibition of viral genome replication. Assembles an SCF-like E3 ubiquitin ligase complex based on the cellular proteins ELOB, ELOC, CUL5 and RBX1, in cooperation with viral E4orf6. This viral RING-type ligase ubiquitinates cellular substrates and targets them to proteasomal degradation: TP53/p53, LIG4, MRE11-RAD50-NBS1 (MRN) complex, ITGA3, DAXX and BLM. E1B-55K probably acts as the substrate-specific adapter of the SCF-like E3 ubiquitin ligase complex. Degradation of host TP53/p53 activity is essential for preventing E1A-induced TP53 accumulation that would otherwise lead to cell apoptosis and growth arrest. E1B-55K also inactivates TP53 transcription-factor activity by binding its transactivation domain. E1B-55K also functions as a SUMO1 E3 ligase for TP53 which causes the latter to be sequestered in promyelocytic leukemia (PML) nuclear bodies thereby contributing to maximal inhibition of TP53 function.</text>
</comment>
<comment type="subunit">
    <text evidence="1 2">Interacts with host PML-4 and PML-5; this interaction promotes efficient subnuclear targeting of E1B-55K to PML nuclear bodies. Interacts with E4-ORF3 protein (By similarity). Interacts with E4-ORF6 protein (By similarity).</text>
</comment>
<comment type="subcellular location">
    <subcellularLocation>
        <location evidence="1">Host nucleus</location>
    </subcellularLocation>
    <subcellularLocation>
        <location evidence="1">Host cytoplasm</location>
    </subcellularLocation>
    <text evidence="1">Colocalizes with host TP53 to host PML nuclear bodies. PML localization of E1B-55K is necessary for E1B-55K-dependent SUMOylation of TP53.</text>
</comment>
<comment type="domain">
    <text evidence="1">Contains a PML interaction motif that allows the subnuclear PML localization.</text>
</comment>
<comment type="similarity">
    <text evidence="3">Belongs to the adenoviridae E1B 55 kDa protein family.</text>
</comment>
<dbReference type="EMBL" id="M22245">
    <property type="protein sequence ID" value="AAA42425.1"/>
    <property type="molecule type" value="Genomic_DNA"/>
</dbReference>
<dbReference type="SMR" id="P12536"/>
<dbReference type="KEGG" id="vg:1732773"/>
<dbReference type="GO" id="GO:0030430">
    <property type="term" value="C:host cell cytoplasm"/>
    <property type="evidence" value="ECO:0000250"/>
    <property type="project" value="UniProtKB"/>
</dbReference>
<dbReference type="GO" id="GO:0042025">
    <property type="term" value="C:host cell nucleus"/>
    <property type="evidence" value="ECO:0007669"/>
    <property type="project" value="UniProtKB-SubCell"/>
</dbReference>
<dbReference type="GO" id="GO:1990756">
    <property type="term" value="F:ubiquitin-like ligase-substrate adaptor activity"/>
    <property type="evidence" value="ECO:0000250"/>
    <property type="project" value="UniProtKB"/>
</dbReference>
<dbReference type="GO" id="GO:0052150">
    <property type="term" value="P:symbiont-mediated perturbation of host apoptosis"/>
    <property type="evidence" value="ECO:0007669"/>
    <property type="project" value="UniProtKB-KW"/>
</dbReference>
<dbReference type="GO" id="GO:0039648">
    <property type="term" value="P:symbiont-mediated perturbation of host ubiquitin-like protein modification"/>
    <property type="evidence" value="ECO:0000250"/>
    <property type="project" value="UniProtKB"/>
</dbReference>
<dbReference type="InterPro" id="IPR002612">
    <property type="entry name" value="Adeno_E1B_55kDa"/>
</dbReference>
<dbReference type="InterPro" id="IPR011050">
    <property type="entry name" value="Pectin_lyase_fold/virulence"/>
</dbReference>
<dbReference type="Pfam" id="PF01696">
    <property type="entry name" value="Adeno_E1B_55K"/>
    <property type="match status" value="1"/>
</dbReference>
<dbReference type="SUPFAM" id="SSF51126">
    <property type="entry name" value="Pectin lyase-like"/>
    <property type="match status" value="1"/>
</dbReference>
<accession>P12536</accession>
<sequence>MEDRQALEEAGEEMGFPVVNISGGGRGRRGNYSNDGSGARELSLRVNEEVTEPPYNSITYAEVLRLYRQNGFSFFLSNLHFEQIKYFEHREGEGDLGAIIREHGKIVLDPNVVYHLRRPLKIQSLCYIVGRGAVIKVHASVGQQAVHVYRQLDISPRIMGMLNVTFLECKFHWADDEGVNFERLARHFTLFFLTYESVFFACDFVGFPGLTLRSTCLLRVEGCTFTSCAVGIHHADVADLKVKACYFNHCSVCIFADGPADVLRNCATNCDCFVIMEQEGSVVGNSVVYKLPPSRADDLMICQQGYMYPLSSIHIVRNLSCEYPKLKNNVFSHVDMHVGLRQGLQHFNQCNLSFVYCMLETESVPKVSFYSSYIQTLTVAQIVQFSREHSRECQCFCGGRHRLLFPSVVHITPTVVPDRTRFTVDVEELSDDE</sequence>
<organismHost>
    <name type="scientific">Mus musculus</name>
    <name type="common">Mouse</name>
    <dbReference type="NCBI Taxonomy" id="10090"/>
</organismHost>
<protein>
    <recommendedName>
        <fullName>E1B 55 kDa protein</fullName>
        <shortName>E1B-55K</shortName>
    </recommendedName>
    <alternativeName>
        <fullName>E1B protein, large T-antigen</fullName>
    </alternativeName>
    <alternativeName>
        <fullName>E1B-495R</fullName>
    </alternativeName>
</protein>
<proteinExistence type="inferred from homology"/>